<sequence>MGSEINDNTIEFDVLKNKEDLTKEILNEVYNSLKEKGYNPINQLVGYLISGDPTYITNYNGARALVRKLERDEILEEVLKSYLGIK</sequence>
<gene>
    <name type="ordered locus">CA_C1679</name>
</gene>
<dbReference type="EMBL" id="AE001437">
    <property type="protein sequence ID" value="AAK79645.1"/>
    <property type="molecule type" value="Genomic_DNA"/>
</dbReference>
<dbReference type="PIR" id="B97107">
    <property type="entry name" value="B97107"/>
</dbReference>
<dbReference type="RefSeq" id="NP_348305.1">
    <property type="nucleotide sequence ID" value="NC_003030.1"/>
</dbReference>
<dbReference type="RefSeq" id="WP_010964986.1">
    <property type="nucleotide sequence ID" value="NC_003030.1"/>
</dbReference>
<dbReference type="SMR" id="Q97IG2"/>
<dbReference type="STRING" id="272562.CA_C1679"/>
<dbReference type="KEGG" id="cac:CA_C1679"/>
<dbReference type="PATRIC" id="fig|272562.8.peg.1882"/>
<dbReference type="eggNOG" id="COG4472">
    <property type="taxonomic scope" value="Bacteria"/>
</dbReference>
<dbReference type="HOGENOM" id="CLU_162466_0_0_9"/>
<dbReference type="OrthoDB" id="9796303at2"/>
<dbReference type="Proteomes" id="UP000000814">
    <property type="component" value="Chromosome"/>
</dbReference>
<dbReference type="HAMAP" id="MF_01507">
    <property type="entry name" value="UPF0297"/>
    <property type="match status" value="1"/>
</dbReference>
<dbReference type="InterPro" id="IPR009309">
    <property type="entry name" value="IreB"/>
</dbReference>
<dbReference type="NCBIfam" id="NF003997">
    <property type="entry name" value="PRK05473.1"/>
    <property type="match status" value="1"/>
</dbReference>
<dbReference type="PANTHER" id="PTHR40067">
    <property type="entry name" value="UPF0297 PROTEIN YRZL"/>
    <property type="match status" value="1"/>
</dbReference>
<dbReference type="PANTHER" id="PTHR40067:SF1">
    <property type="entry name" value="UPF0297 PROTEIN YRZL"/>
    <property type="match status" value="1"/>
</dbReference>
<dbReference type="Pfam" id="PF06135">
    <property type="entry name" value="IreB"/>
    <property type="match status" value="1"/>
</dbReference>
<dbReference type="PIRSF" id="PIRSF037258">
    <property type="entry name" value="DUF965_bac"/>
    <property type="match status" value="1"/>
</dbReference>
<reference key="1">
    <citation type="journal article" date="2001" name="J. Bacteriol.">
        <title>Genome sequence and comparative analysis of the solvent-producing bacterium Clostridium acetobutylicum.</title>
        <authorList>
            <person name="Noelling J."/>
            <person name="Breton G."/>
            <person name="Omelchenko M.V."/>
            <person name="Makarova K.S."/>
            <person name="Zeng Q."/>
            <person name="Gibson R."/>
            <person name="Lee H.M."/>
            <person name="Dubois J."/>
            <person name="Qiu D."/>
            <person name="Hitti J."/>
            <person name="Wolf Y.I."/>
            <person name="Tatusov R.L."/>
            <person name="Sabathe F."/>
            <person name="Doucette-Stamm L.A."/>
            <person name="Soucaille P."/>
            <person name="Daly M.J."/>
            <person name="Bennett G.N."/>
            <person name="Koonin E.V."/>
            <person name="Smith D.R."/>
        </authorList>
    </citation>
    <scope>NUCLEOTIDE SEQUENCE [LARGE SCALE GENOMIC DNA]</scope>
    <source>
        <strain>ATCC 824 / DSM 792 / JCM 1419 / IAM 19013 / LMG 5710 / NBRC 13948 / NRRL B-527 / VKM B-1787 / 2291 / W</strain>
    </source>
</reference>
<name>Y1679_CLOAB</name>
<organism>
    <name type="scientific">Clostridium acetobutylicum (strain ATCC 824 / DSM 792 / JCM 1419 / IAM 19013 / LMG 5710 / NBRC 13948 / NRRL B-527 / VKM B-1787 / 2291 / W)</name>
    <dbReference type="NCBI Taxonomy" id="272562"/>
    <lineage>
        <taxon>Bacteria</taxon>
        <taxon>Bacillati</taxon>
        <taxon>Bacillota</taxon>
        <taxon>Clostridia</taxon>
        <taxon>Eubacteriales</taxon>
        <taxon>Clostridiaceae</taxon>
        <taxon>Clostridium</taxon>
    </lineage>
</organism>
<accession>Q97IG2</accession>
<feature type="chain" id="PRO_0000216965" description="UPF0297 protein CA_C1679">
    <location>
        <begin position="1"/>
        <end position="86"/>
    </location>
</feature>
<keyword id="KW-1185">Reference proteome</keyword>
<protein>
    <recommendedName>
        <fullName evidence="1">UPF0297 protein CA_C1679</fullName>
    </recommendedName>
</protein>
<proteinExistence type="inferred from homology"/>
<comment type="similarity">
    <text evidence="1">Belongs to the UPF0297 family.</text>
</comment>
<evidence type="ECO:0000255" key="1">
    <source>
        <dbReference type="HAMAP-Rule" id="MF_01507"/>
    </source>
</evidence>